<organism>
    <name type="scientific">Corynebacterium efficiens (strain DSM 44549 / YS-314 / AJ 12310 / JCM 11189 / NBRC 100395)</name>
    <dbReference type="NCBI Taxonomy" id="196164"/>
    <lineage>
        <taxon>Bacteria</taxon>
        <taxon>Bacillati</taxon>
        <taxon>Actinomycetota</taxon>
        <taxon>Actinomycetes</taxon>
        <taxon>Mycobacteriales</taxon>
        <taxon>Corynebacteriaceae</taxon>
        <taxon>Corynebacterium</taxon>
    </lineage>
</organism>
<gene>
    <name type="ordered locus">CE2574</name>
</gene>
<comment type="function">
    <text evidence="1">ATP-dependent carboxylate-amine ligase which exhibits weak glutamate--cysteine ligase activity.</text>
</comment>
<comment type="catalytic activity">
    <reaction evidence="1">
        <text>L-cysteine + L-glutamate + ATP = gamma-L-glutamyl-L-cysteine + ADP + phosphate + H(+)</text>
        <dbReference type="Rhea" id="RHEA:13285"/>
        <dbReference type="ChEBI" id="CHEBI:15378"/>
        <dbReference type="ChEBI" id="CHEBI:29985"/>
        <dbReference type="ChEBI" id="CHEBI:30616"/>
        <dbReference type="ChEBI" id="CHEBI:35235"/>
        <dbReference type="ChEBI" id="CHEBI:43474"/>
        <dbReference type="ChEBI" id="CHEBI:58173"/>
        <dbReference type="ChEBI" id="CHEBI:456216"/>
        <dbReference type="EC" id="6.3.2.2"/>
    </reaction>
</comment>
<comment type="similarity">
    <text evidence="1">Belongs to the glutamate--cysteine ligase type 2 family. YbdK subfamily.</text>
</comment>
<sequence>MAIEFKRSPKPTIGVEWEIALVDPESRDLAPRAAEVLEIVAERHPEVHLEGEFLQNTVELVTGICDTVPEAVAELDRALAAVQEAATELGLRPWTSGSHPFSDFRENPVSKKGSYDEIIARTQYWGNQMLIWGIHVHVGISHEDRVWPIINALVTNYPHLLALSASSPAWDGLDTGYASNRTMLYQQLPTAGLPYQFQSWDEWVSYMADQDKSGVINHTGSMHFDIRPASKWGTIEVRIADSTSNLRELSAIAALTHCLVVHYDRMIDRGEQLPTLQPWHVAENKWRAARYGLDAEIIISRDTDEAMVQDELRRLVDRLTPLAAELGCLRELDLVLEIIERGGGYERQRRAYQRTGTWIAAVDLACDELNELRPLEAE</sequence>
<proteinExistence type="inferred from homology"/>
<protein>
    <recommendedName>
        <fullName evidence="1">Putative glutamate--cysteine ligase 2-1</fullName>
        <ecNumber evidence="1">6.3.2.2</ecNumber>
    </recommendedName>
    <alternativeName>
        <fullName evidence="1">Gamma-glutamylcysteine synthetase 2-1</fullName>
        <shortName evidence="1">GCS 2-1</shortName>
        <shortName evidence="1">Gamma-GCS 2-1</shortName>
    </alternativeName>
</protein>
<feature type="chain" id="PRO_0000218193" description="Putative glutamate--cysteine ligase 2-1">
    <location>
        <begin position="1"/>
        <end position="378"/>
    </location>
</feature>
<dbReference type="EC" id="6.3.2.2" evidence="1"/>
<dbReference type="EMBL" id="BA000035">
    <property type="protein sequence ID" value="BAC19384.1"/>
    <property type="molecule type" value="Genomic_DNA"/>
</dbReference>
<dbReference type="RefSeq" id="WP_006769064.1">
    <property type="nucleotide sequence ID" value="NZ_GG700685.1"/>
</dbReference>
<dbReference type="SMR" id="Q8FMD3"/>
<dbReference type="STRING" id="196164.gene:10743021"/>
<dbReference type="KEGG" id="cef:CE2574"/>
<dbReference type="eggNOG" id="COG2170">
    <property type="taxonomic scope" value="Bacteria"/>
</dbReference>
<dbReference type="HOGENOM" id="CLU_044848_1_0_11"/>
<dbReference type="OrthoDB" id="9769628at2"/>
<dbReference type="Proteomes" id="UP000001409">
    <property type="component" value="Chromosome"/>
</dbReference>
<dbReference type="GO" id="GO:0005524">
    <property type="term" value="F:ATP binding"/>
    <property type="evidence" value="ECO:0007669"/>
    <property type="project" value="UniProtKB-KW"/>
</dbReference>
<dbReference type="GO" id="GO:0004357">
    <property type="term" value="F:glutamate-cysteine ligase activity"/>
    <property type="evidence" value="ECO:0007669"/>
    <property type="project" value="UniProtKB-EC"/>
</dbReference>
<dbReference type="GO" id="GO:0042398">
    <property type="term" value="P:modified amino acid biosynthetic process"/>
    <property type="evidence" value="ECO:0007669"/>
    <property type="project" value="InterPro"/>
</dbReference>
<dbReference type="Gene3D" id="3.30.590.20">
    <property type="match status" value="1"/>
</dbReference>
<dbReference type="HAMAP" id="MF_01609">
    <property type="entry name" value="Glu_cys_ligase_2"/>
    <property type="match status" value="1"/>
</dbReference>
<dbReference type="InterPro" id="IPR050141">
    <property type="entry name" value="GCL_type2/YbdK_subfam"/>
</dbReference>
<dbReference type="InterPro" id="IPR006336">
    <property type="entry name" value="GCS2"/>
</dbReference>
<dbReference type="InterPro" id="IPR014746">
    <property type="entry name" value="Gln_synth/guanido_kin_cat_dom"/>
</dbReference>
<dbReference type="InterPro" id="IPR011793">
    <property type="entry name" value="YbdK"/>
</dbReference>
<dbReference type="NCBIfam" id="TIGR02050">
    <property type="entry name" value="gshA_cyan_rel"/>
    <property type="match status" value="1"/>
</dbReference>
<dbReference type="NCBIfam" id="NF010042">
    <property type="entry name" value="PRK13517.1-2"/>
    <property type="match status" value="1"/>
</dbReference>
<dbReference type="NCBIfam" id="NF010044">
    <property type="entry name" value="PRK13517.1-4"/>
    <property type="match status" value="1"/>
</dbReference>
<dbReference type="PANTHER" id="PTHR36510">
    <property type="entry name" value="GLUTAMATE--CYSTEINE LIGASE 2-RELATED"/>
    <property type="match status" value="1"/>
</dbReference>
<dbReference type="PANTHER" id="PTHR36510:SF1">
    <property type="entry name" value="GLUTAMATE--CYSTEINE LIGASE 2-RELATED"/>
    <property type="match status" value="1"/>
</dbReference>
<dbReference type="Pfam" id="PF04107">
    <property type="entry name" value="GCS2"/>
    <property type="match status" value="1"/>
</dbReference>
<dbReference type="SUPFAM" id="SSF55931">
    <property type="entry name" value="Glutamine synthetase/guanido kinase"/>
    <property type="match status" value="1"/>
</dbReference>
<keyword id="KW-0067">ATP-binding</keyword>
<keyword id="KW-0436">Ligase</keyword>
<keyword id="KW-0547">Nucleotide-binding</keyword>
<keyword id="KW-1185">Reference proteome</keyword>
<name>GCS21_COREF</name>
<accession>Q8FMD3</accession>
<evidence type="ECO:0000255" key="1">
    <source>
        <dbReference type="HAMAP-Rule" id="MF_01609"/>
    </source>
</evidence>
<reference key="1">
    <citation type="journal article" date="2003" name="Genome Res.">
        <title>Comparative complete genome sequence analysis of the amino acid replacements responsible for the thermostability of Corynebacterium efficiens.</title>
        <authorList>
            <person name="Nishio Y."/>
            <person name="Nakamura Y."/>
            <person name="Kawarabayasi Y."/>
            <person name="Usuda Y."/>
            <person name="Kimura E."/>
            <person name="Sugimoto S."/>
            <person name="Matsui K."/>
            <person name="Yamagishi A."/>
            <person name="Kikuchi H."/>
            <person name="Ikeo K."/>
            <person name="Gojobori T."/>
        </authorList>
    </citation>
    <scope>NUCLEOTIDE SEQUENCE [LARGE SCALE GENOMIC DNA]</scope>
    <source>
        <strain>DSM 44549 / YS-314 / AJ 12310 / JCM 11189 / NBRC 100395</strain>
    </source>
</reference>